<organism>
    <name type="scientific">Staphylococcus carnosus (strain TM300)</name>
    <dbReference type="NCBI Taxonomy" id="396513"/>
    <lineage>
        <taxon>Bacteria</taxon>
        <taxon>Bacillati</taxon>
        <taxon>Bacillota</taxon>
        <taxon>Bacilli</taxon>
        <taxon>Bacillales</taxon>
        <taxon>Staphylococcaceae</taxon>
        <taxon>Staphylococcus</taxon>
    </lineage>
</organism>
<comment type="function">
    <text evidence="1">Represses a number of genes involved in the response to DNA damage (SOS response), including recA and lexA. In the presence of single-stranded DNA, RecA interacts with LexA causing an autocatalytic cleavage which disrupts the DNA-binding part of LexA, leading to derepression of the SOS regulon and eventually DNA repair.</text>
</comment>
<comment type="catalytic activity">
    <reaction evidence="1">
        <text>Hydrolysis of Ala-|-Gly bond in repressor LexA.</text>
        <dbReference type="EC" id="3.4.21.88"/>
    </reaction>
</comment>
<comment type="subunit">
    <text evidence="1">Homodimer.</text>
</comment>
<comment type="similarity">
    <text evidence="1">Belongs to the peptidase S24 family.</text>
</comment>
<dbReference type="EC" id="3.4.21.88" evidence="1"/>
<dbReference type="EMBL" id="AM295250">
    <property type="protein sequence ID" value="CAL27888.1"/>
    <property type="molecule type" value="Genomic_DNA"/>
</dbReference>
<dbReference type="RefSeq" id="WP_015900229.1">
    <property type="nucleotide sequence ID" value="NC_012121.1"/>
</dbReference>
<dbReference type="SMR" id="B9DP69"/>
<dbReference type="MEROPS" id="S24.001"/>
<dbReference type="GeneID" id="93793407"/>
<dbReference type="KEGG" id="sca:SCA_0980"/>
<dbReference type="eggNOG" id="COG1974">
    <property type="taxonomic scope" value="Bacteria"/>
</dbReference>
<dbReference type="HOGENOM" id="CLU_066192_45_1_9"/>
<dbReference type="OrthoDB" id="9802364at2"/>
<dbReference type="BioCyc" id="SCAR396513:SCA_RS04925-MONOMER"/>
<dbReference type="Proteomes" id="UP000000444">
    <property type="component" value="Chromosome"/>
</dbReference>
<dbReference type="GO" id="GO:0003677">
    <property type="term" value="F:DNA binding"/>
    <property type="evidence" value="ECO:0007669"/>
    <property type="project" value="UniProtKB-UniRule"/>
</dbReference>
<dbReference type="GO" id="GO:0004252">
    <property type="term" value="F:serine-type endopeptidase activity"/>
    <property type="evidence" value="ECO:0007669"/>
    <property type="project" value="UniProtKB-UniRule"/>
</dbReference>
<dbReference type="GO" id="GO:0006281">
    <property type="term" value="P:DNA repair"/>
    <property type="evidence" value="ECO:0007669"/>
    <property type="project" value="UniProtKB-UniRule"/>
</dbReference>
<dbReference type="GO" id="GO:0006260">
    <property type="term" value="P:DNA replication"/>
    <property type="evidence" value="ECO:0007669"/>
    <property type="project" value="UniProtKB-UniRule"/>
</dbReference>
<dbReference type="GO" id="GO:0045892">
    <property type="term" value="P:negative regulation of DNA-templated transcription"/>
    <property type="evidence" value="ECO:0007669"/>
    <property type="project" value="UniProtKB-UniRule"/>
</dbReference>
<dbReference type="GO" id="GO:0006508">
    <property type="term" value="P:proteolysis"/>
    <property type="evidence" value="ECO:0007669"/>
    <property type="project" value="InterPro"/>
</dbReference>
<dbReference type="GO" id="GO:0009432">
    <property type="term" value="P:SOS response"/>
    <property type="evidence" value="ECO:0007669"/>
    <property type="project" value="UniProtKB-UniRule"/>
</dbReference>
<dbReference type="CDD" id="cd00090">
    <property type="entry name" value="HTH_ARSR"/>
    <property type="match status" value="1"/>
</dbReference>
<dbReference type="CDD" id="cd06529">
    <property type="entry name" value="S24_LexA-like"/>
    <property type="match status" value="1"/>
</dbReference>
<dbReference type="FunFam" id="1.10.10.10:FF:000009">
    <property type="entry name" value="LexA repressor"/>
    <property type="match status" value="1"/>
</dbReference>
<dbReference type="FunFam" id="2.10.109.10:FF:000001">
    <property type="entry name" value="LexA repressor"/>
    <property type="match status" value="1"/>
</dbReference>
<dbReference type="Gene3D" id="2.10.109.10">
    <property type="entry name" value="Umud Fragment, subunit A"/>
    <property type="match status" value="1"/>
</dbReference>
<dbReference type="Gene3D" id="1.10.10.10">
    <property type="entry name" value="Winged helix-like DNA-binding domain superfamily/Winged helix DNA-binding domain"/>
    <property type="match status" value="1"/>
</dbReference>
<dbReference type="HAMAP" id="MF_00015">
    <property type="entry name" value="LexA"/>
    <property type="match status" value="1"/>
</dbReference>
<dbReference type="InterPro" id="IPR011991">
    <property type="entry name" value="ArsR-like_HTH"/>
</dbReference>
<dbReference type="InterPro" id="IPR006200">
    <property type="entry name" value="LexA"/>
</dbReference>
<dbReference type="InterPro" id="IPR039418">
    <property type="entry name" value="LexA-like"/>
</dbReference>
<dbReference type="InterPro" id="IPR036286">
    <property type="entry name" value="LexA/Signal_pep-like_sf"/>
</dbReference>
<dbReference type="InterPro" id="IPR006199">
    <property type="entry name" value="LexA_DNA-bd_dom"/>
</dbReference>
<dbReference type="InterPro" id="IPR050077">
    <property type="entry name" value="LexA_repressor"/>
</dbReference>
<dbReference type="InterPro" id="IPR006197">
    <property type="entry name" value="Peptidase_S24_LexA"/>
</dbReference>
<dbReference type="InterPro" id="IPR015927">
    <property type="entry name" value="Peptidase_S24_S26A/B/C"/>
</dbReference>
<dbReference type="InterPro" id="IPR036388">
    <property type="entry name" value="WH-like_DNA-bd_sf"/>
</dbReference>
<dbReference type="InterPro" id="IPR036390">
    <property type="entry name" value="WH_DNA-bd_sf"/>
</dbReference>
<dbReference type="NCBIfam" id="TIGR00498">
    <property type="entry name" value="lexA"/>
    <property type="match status" value="1"/>
</dbReference>
<dbReference type="PANTHER" id="PTHR33516">
    <property type="entry name" value="LEXA REPRESSOR"/>
    <property type="match status" value="1"/>
</dbReference>
<dbReference type="PANTHER" id="PTHR33516:SF2">
    <property type="entry name" value="LEXA REPRESSOR-RELATED"/>
    <property type="match status" value="1"/>
</dbReference>
<dbReference type="Pfam" id="PF01726">
    <property type="entry name" value="LexA_DNA_bind"/>
    <property type="match status" value="1"/>
</dbReference>
<dbReference type="Pfam" id="PF00717">
    <property type="entry name" value="Peptidase_S24"/>
    <property type="match status" value="1"/>
</dbReference>
<dbReference type="PRINTS" id="PR00726">
    <property type="entry name" value="LEXASERPTASE"/>
</dbReference>
<dbReference type="SUPFAM" id="SSF51306">
    <property type="entry name" value="LexA/Signal peptidase"/>
    <property type="match status" value="1"/>
</dbReference>
<dbReference type="SUPFAM" id="SSF46785">
    <property type="entry name" value="Winged helix' DNA-binding domain"/>
    <property type="match status" value="1"/>
</dbReference>
<reference key="1">
    <citation type="journal article" date="2009" name="Appl. Environ. Microbiol.">
        <title>Genome analysis of the meat starter culture bacterium Staphylococcus carnosus TM300.</title>
        <authorList>
            <person name="Rosenstein R."/>
            <person name="Nerz C."/>
            <person name="Biswas L."/>
            <person name="Resch A."/>
            <person name="Raddatz G."/>
            <person name="Schuster S.C."/>
            <person name="Goetz F."/>
        </authorList>
    </citation>
    <scope>NUCLEOTIDE SEQUENCE [LARGE SCALE GENOMIC DNA]</scope>
    <source>
        <strain>TM300</strain>
    </source>
</reference>
<gene>
    <name evidence="1" type="primary">lexA</name>
    <name type="ordered locus">Sca_0980</name>
</gene>
<keyword id="KW-0068">Autocatalytic cleavage</keyword>
<keyword id="KW-0227">DNA damage</keyword>
<keyword id="KW-0234">DNA repair</keyword>
<keyword id="KW-0235">DNA replication</keyword>
<keyword id="KW-0238">DNA-binding</keyword>
<keyword id="KW-0378">Hydrolase</keyword>
<keyword id="KW-1185">Reference proteome</keyword>
<keyword id="KW-0678">Repressor</keyword>
<keyword id="KW-0742">SOS response</keyword>
<keyword id="KW-0804">Transcription</keyword>
<keyword id="KW-0805">Transcription regulation</keyword>
<sequence length="207" mass="23148">MTELTKRQSEIYEYIKTVVHTKGYPPSVREIGEAVGLASSSTVHGHLSRLESKGYIRRDPTKPRAIEIVSDQLEENAEMEGTIHVPVIGKVTAGVPITAVENIEEYFPLPEHLTSTHNSDIFILNVVGDSMIEAGILDGDKVIVRSQTIAENGDIIVAMTEDDEATVKRFYKEKHRYRLQPENSTMDPIYLEQVTVLGKVVGLFREL</sequence>
<feature type="chain" id="PRO_1000192778" description="LexA repressor">
    <location>
        <begin position="1"/>
        <end position="207"/>
    </location>
</feature>
<feature type="DNA-binding region" description="H-T-H motif" evidence="1">
    <location>
        <begin position="28"/>
        <end position="48"/>
    </location>
</feature>
<feature type="active site" description="For autocatalytic cleavage activity" evidence="1">
    <location>
        <position position="130"/>
    </location>
</feature>
<feature type="active site" description="For autocatalytic cleavage activity" evidence="1">
    <location>
        <position position="168"/>
    </location>
</feature>
<feature type="site" description="Cleavage; by autolysis" evidence="1">
    <location>
        <begin position="93"/>
        <end position="94"/>
    </location>
</feature>
<name>LEXA_STACT</name>
<protein>
    <recommendedName>
        <fullName evidence="1">LexA repressor</fullName>
        <ecNumber evidence="1">3.4.21.88</ecNumber>
    </recommendedName>
</protein>
<evidence type="ECO:0000255" key="1">
    <source>
        <dbReference type="HAMAP-Rule" id="MF_00015"/>
    </source>
</evidence>
<accession>B9DP69</accession>
<proteinExistence type="inferred from homology"/>